<comment type="function">
    <text evidence="1">One of the primary rRNA binding proteins, it binds directly to 16S rRNA where it nucleates assembly of the body of the 30S subunit.</text>
</comment>
<comment type="function">
    <text evidence="1">With S5 and S12 plays an important role in translational accuracy.</text>
</comment>
<comment type="subunit">
    <text evidence="1">Part of the 30S ribosomal subunit. Contacts protein S5. The interaction surface between S4 and S5 is involved in control of translational fidelity.</text>
</comment>
<comment type="similarity">
    <text evidence="1">Belongs to the universal ribosomal protein uS4 family.</text>
</comment>
<organism>
    <name type="scientific">Ruegeria sp. (strain TM1040)</name>
    <name type="common">Silicibacter sp.</name>
    <dbReference type="NCBI Taxonomy" id="292414"/>
    <lineage>
        <taxon>Bacteria</taxon>
        <taxon>Pseudomonadati</taxon>
        <taxon>Pseudomonadota</taxon>
        <taxon>Alphaproteobacteria</taxon>
        <taxon>Rhodobacterales</taxon>
        <taxon>Roseobacteraceae</taxon>
        <taxon>Ruegeria</taxon>
    </lineage>
</organism>
<feature type="chain" id="PRO_0000293371" description="Small ribosomal subunit protein uS4">
    <location>
        <begin position="1"/>
        <end position="206"/>
    </location>
</feature>
<feature type="domain" description="S4 RNA-binding" evidence="1">
    <location>
        <begin position="94"/>
        <end position="156"/>
    </location>
</feature>
<feature type="region of interest" description="Disordered" evidence="2">
    <location>
        <begin position="18"/>
        <end position="46"/>
    </location>
</feature>
<evidence type="ECO:0000255" key="1">
    <source>
        <dbReference type="HAMAP-Rule" id="MF_01306"/>
    </source>
</evidence>
<evidence type="ECO:0000256" key="2">
    <source>
        <dbReference type="SAM" id="MobiDB-lite"/>
    </source>
</evidence>
<evidence type="ECO:0000305" key="3"/>
<dbReference type="EMBL" id="CP000377">
    <property type="protein sequence ID" value="ABF64839.1"/>
    <property type="molecule type" value="Genomic_DNA"/>
</dbReference>
<dbReference type="RefSeq" id="WP_011539431.1">
    <property type="nucleotide sequence ID" value="NC_008044.1"/>
</dbReference>
<dbReference type="SMR" id="Q1GES7"/>
<dbReference type="STRING" id="292414.TM1040_2107"/>
<dbReference type="KEGG" id="sit:TM1040_2107"/>
<dbReference type="eggNOG" id="COG0522">
    <property type="taxonomic scope" value="Bacteria"/>
</dbReference>
<dbReference type="HOGENOM" id="CLU_092403_0_0_5"/>
<dbReference type="OrthoDB" id="9803672at2"/>
<dbReference type="Proteomes" id="UP000000636">
    <property type="component" value="Chromosome"/>
</dbReference>
<dbReference type="GO" id="GO:0015935">
    <property type="term" value="C:small ribosomal subunit"/>
    <property type="evidence" value="ECO:0007669"/>
    <property type="project" value="InterPro"/>
</dbReference>
<dbReference type="GO" id="GO:0019843">
    <property type="term" value="F:rRNA binding"/>
    <property type="evidence" value="ECO:0007669"/>
    <property type="project" value="UniProtKB-UniRule"/>
</dbReference>
<dbReference type="GO" id="GO:0003735">
    <property type="term" value="F:structural constituent of ribosome"/>
    <property type="evidence" value="ECO:0007669"/>
    <property type="project" value="InterPro"/>
</dbReference>
<dbReference type="GO" id="GO:0042274">
    <property type="term" value="P:ribosomal small subunit biogenesis"/>
    <property type="evidence" value="ECO:0007669"/>
    <property type="project" value="TreeGrafter"/>
</dbReference>
<dbReference type="GO" id="GO:0006412">
    <property type="term" value="P:translation"/>
    <property type="evidence" value="ECO:0007669"/>
    <property type="project" value="UniProtKB-UniRule"/>
</dbReference>
<dbReference type="CDD" id="cd00165">
    <property type="entry name" value="S4"/>
    <property type="match status" value="1"/>
</dbReference>
<dbReference type="FunFam" id="3.10.290.10:FF:000001">
    <property type="entry name" value="30S ribosomal protein S4"/>
    <property type="match status" value="1"/>
</dbReference>
<dbReference type="Gene3D" id="1.10.1050.10">
    <property type="entry name" value="Ribosomal Protein S4 Delta 41, Chain A, domain 1"/>
    <property type="match status" value="1"/>
</dbReference>
<dbReference type="Gene3D" id="3.10.290.10">
    <property type="entry name" value="RNA-binding S4 domain"/>
    <property type="match status" value="1"/>
</dbReference>
<dbReference type="HAMAP" id="MF_01306_B">
    <property type="entry name" value="Ribosomal_uS4_B"/>
    <property type="match status" value="1"/>
</dbReference>
<dbReference type="InterPro" id="IPR022801">
    <property type="entry name" value="Ribosomal_uS4"/>
</dbReference>
<dbReference type="InterPro" id="IPR005709">
    <property type="entry name" value="Ribosomal_uS4_bac-type"/>
</dbReference>
<dbReference type="InterPro" id="IPR018079">
    <property type="entry name" value="Ribosomal_uS4_CS"/>
</dbReference>
<dbReference type="InterPro" id="IPR001912">
    <property type="entry name" value="Ribosomal_uS4_N"/>
</dbReference>
<dbReference type="InterPro" id="IPR002942">
    <property type="entry name" value="S4_RNA-bd"/>
</dbReference>
<dbReference type="InterPro" id="IPR036986">
    <property type="entry name" value="S4_RNA-bd_sf"/>
</dbReference>
<dbReference type="NCBIfam" id="NF003717">
    <property type="entry name" value="PRK05327.1"/>
    <property type="match status" value="1"/>
</dbReference>
<dbReference type="NCBIfam" id="TIGR01017">
    <property type="entry name" value="rpsD_bact"/>
    <property type="match status" value="1"/>
</dbReference>
<dbReference type="PANTHER" id="PTHR11831">
    <property type="entry name" value="30S 40S RIBOSOMAL PROTEIN"/>
    <property type="match status" value="1"/>
</dbReference>
<dbReference type="PANTHER" id="PTHR11831:SF4">
    <property type="entry name" value="SMALL RIBOSOMAL SUBUNIT PROTEIN US4M"/>
    <property type="match status" value="1"/>
</dbReference>
<dbReference type="Pfam" id="PF00163">
    <property type="entry name" value="Ribosomal_S4"/>
    <property type="match status" value="1"/>
</dbReference>
<dbReference type="Pfam" id="PF01479">
    <property type="entry name" value="S4"/>
    <property type="match status" value="1"/>
</dbReference>
<dbReference type="SMART" id="SM01390">
    <property type="entry name" value="Ribosomal_S4"/>
    <property type="match status" value="1"/>
</dbReference>
<dbReference type="SMART" id="SM00363">
    <property type="entry name" value="S4"/>
    <property type="match status" value="1"/>
</dbReference>
<dbReference type="SUPFAM" id="SSF55174">
    <property type="entry name" value="Alpha-L RNA-binding motif"/>
    <property type="match status" value="1"/>
</dbReference>
<dbReference type="PROSITE" id="PS00632">
    <property type="entry name" value="RIBOSOMAL_S4"/>
    <property type="match status" value="1"/>
</dbReference>
<dbReference type="PROSITE" id="PS50889">
    <property type="entry name" value="S4"/>
    <property type="match status" value="1"/>
</dbReference>
<protein>
    <recommendedName>
        <fullName evidence="1">Small ribosomal subunit protein uS4</fullName>
    </recommendedName>
    <alternativeName>
        <fullName evidence="3">30S ribosomal protein S4</fullName>
    </alternativeName>
</protein>
<accession>Q1GES7</accession>
<reference key="1">
    <citation type="submission" date="2006-05" db="EMBL/GenBank/DDBJ databases">
        <title>Complete sequence of chromosome of Silicibacter sp. TM1040.</title>
        <authorList>
            <consortium name="US DOE Joint Genome Institute"/>
            <person name="Copeland A."/>
            <person name="Lucas S."/>
            <person name="Lapidus A."/>
            <person name="Barry K."/>
            <person name="Detter J.C."/>
            <person name="Glavina del Rio T."/>
            <person name="Hammon N."/>
            <person name="Israni S."/>
            <person name="Dalin E."/>
            <person name="Tice H."/>
            <person name="Pitluck S."/>
            <person name="Brettin T."/>
            <person name="Bruce D."/>
            <person name="Han C."/>
            <person name="Tapia R."/>
            <person name="Goodwin L."/>
            <person name="Thompson L.S."/>
            <person name="Gilna P."/>
            <person name="Schmutz J."/>
            <person name="Larimer F."/>
            <person name="Land M."/>
            <person name="Hauser L."/>
            <person name="Kyrpides N."/>
            <person name="Kim E."/>
            <person name="Belas R."/>
            <person name="Moran M.A."/>
            <person name="Buchan A."/>
            <person name="Gonzalez J.M."/>
            <person name="Schell M.A."/>
            <person name="Sun F."/>
            <person name="Richardson P."/>
        </authorList>
    </citation>
    <scope>NUCLEOTIDE SEQUENCE [LARGE SCALE GENOMIC DNA]</scope>
    <source>
        <strain>TM1040</strain>
    </source>
</reference>
<name>RS4_RUEST</name>
<sequence>MTKRTSAKYKIDRRMGENIWGRPKSPVNRREYGPGQHGQRRKGKLSDFGIQLRAKQKLKGYYGDLTEKQFRRIYGEAERVKGDTGENLIGLLERRLDAVVYRAKFVPTVFAARQFVNHGHVLVNGKRVNIPSYRVKEGDVIEVREKSKQNVAVLEAVQLAERDVPDYIEVDHSKLTATFVRAPGLADVPYPVVMEPNLVVEFYAKN</sequence>
<proteinExistence type="inferred from homology"/>
<gene>
    <name evidence="1" type="primary">rpsD</name>
    <name type="ordered locus">TM1040_2107</name>
</gene>
<keyword id="KW-1185">Reference proteome</keyword>
<keyword id="KW-0687">Ribonucleoprotein</keyword>
<keyword id="KW-0689">Ribosomal protein</keyword>
<keyword id="KW-0694">RNA-binding</keyword>
<keyword id="KW-0699">rRNA-binding</keyword>